<proteinExistence type="inferred from homology"/>
<accession>Q49WC6</accession>
<name>SPX_STAS1</name>
<comment type="function">
    <text evidence="1">Global transcriptional regulator that plays a key role in stress response and exerts either positive or negative regulation of genes. Acts by interacting with the C-terminal domain of the alpha subunit of the RNA polymerase (RNAP). This interaction can enhance binding of RNAP to the promoter region of target genes and stimulate their transcription, or block interaction of RNAP with activator.</text>
</comment>
<comment type="subunit">
    <text evidence="1">Interacts with the C-terminal domain of the alpha subunit of the RNAP.</text>
</comment>
<comment type="subcellular location">
    <subcellularLocation>
        <location evidence="1">Cytoplasm</location>
    </subcellularLocation>
</comment>
<comment type="similarity">
    <text evidence="1">Belongs to the ArsC family. Spx subfamily.</text>
</comment>
<organism>
    <name type="scientific">Staphylococcus saprophyticus subsp. saprophyticus (strain ATCC 15305 / DSM 20229 / NCIMB 8711 / NCTC 7292 / S-41)</name>
    <dbReference type="NCBI Taxonomy" id="342451"/>
    <lineage>
        <taxon>Bacteria</taxon>
        <taxon>Bacillati</taxon>
        <taxon>Bacillota</taxon>
        <taxon>Bacilli</taxon>
        <taxon>Bacillales</taxon>
        <taxon>Staphylococcaceae</taxon>
        <taxon>Staphylococcus</taxon>
    </lineage>
</organism>
<reference key="1">
    <citation type="journal article" date="2005" name="Proc. Natl. Acad. Sci. U.S.A.">
        <title>Whole genome sequence of Staphylococcus saprophyticus reveals the pathogenesis of uncomplicated urinary tract infection.</title>
        <authorList>
            <person name="Kuroda M."/>
            <person name="Yamashita A."/>
            <person name="Hirakawa H."/>
            <person name="Kumano M."/>
            <person name="Morikawa K."/>
            <person name="Higashide M."/>
            <person name="Maruyama A."/>
            <person name="Inose Y."/>
            <person name="Matoba K."/>
            <person name="Toh H."/>
            <person name="Kuhara S."/>
            <person name="Hattori M."/>
            <person name="Ohta T."/>
        </authorList>
    </citation>
    <scope>NUCLEOTIDE SEQUENCE [LARGE SCALE GENOMIC DNA]</scope>
    <source>
        <strain>ATCC 15305 / DSM 20229 / NCIMB 8711 / NCTC 7292 / S-41</strain>
    </source>
</reference>
<gene>
    <name evidence="1" type="primary">spx</name>
    <name type="ordered locus">SSP1788</name>
</gene>
<evidence type="ECO:0000255" key="1">
    <source>
        <dbReference type="HAMAP-Rule" id="MF_01132"/>
    </source>
</evidence>
<feature type="chain" id="PRO_0000162571" description="Global transcriptional regulator Spx">
    <location>
        <begin position="1"/>
        <end position="131"/>
    </location>
</feature>
<feature type="disulfide bond" description="Redox-active" evidence="1">
    <location>
        <begin position="10"/>
        <end position="13"/>
    </location>
</feature>
<dbReference type="EMBL" id="AP008934">
    <property type="protein sequence ID" value="BAE18933.1"/>
    <property type="molecule type" value="Genomic_DNA"/>
</dbReference>
<dbReference type="SMR" id="Q49WC6"/>
<dbReference type="KEGG" id="ssp:SSP1788"/>
<dbReference type="eggNOG" id="COG1393">
    <property type="taxonomic scope" value="Bacteria"/>
</dbReference>
<dbReference type="HOGENOM" id="CLU_116644_1_1_9"/>
<dbReference type="OrthoDB" id="9794155at2"/>
<dbReference type="Proteomes" id="UP000006371">
    <property type="component" value="Chromosome"/>
</dbReference>
<dbReference type="GO" id="GO:0005737">
    <property type="term" value="C:cytoplasm"/>
    <property type="evidence" value="ECO:0007669"/>
    <property type="project" value="UniProtKB-SubCell"/>
</dbReference>
<dbReference type="GO" id="GO:0045892">
    <property type="term" value="P:negative regulation of DNA-templated transcription"/>
    <property type="evidence" value="ECO:0007669"/>
    <property type="project" value="InterPro"/>
</dbReference>
<dbReference type="CDD" id="cd03032">
    <property type="entry name" value="ArsC_Spx"/>
    <property type="match status" value="1"/>
</dbReference>
<dbReference type="Gene3D" id="3.40.30.10">
    <property type="entry name" value="Glutaredoxin"/>
    <property type="match status" value="1"/>
</dbReference>
<dbReference type="HAMAP" id="MF_01132">
    <property type="entry name" value="Spx"/>
    <property type="match status" value="1"/>
</dbReference>
<dbReference type="InterPro" id="IPR006660">
    <property type="entry name" value="Arsenate_reductase-like"/>
</dbReference>
<dbReference type="InterPro" id="IPR023731">
    <property type="entry name" value="Spx"/>
</dbReference>
<dbReference type="InterPro" id="IPR036249">
    <property type="entry name" value="Thioredoxin-like_sf"/>
</dbReference>
<dbReference type="InterPro" id="IPR006504">
    <property type="entry name" value="Tscrpt_reg_Spx/MgsR"/>
</dbReference>
<dbReference type="NCBIfam" id="TIGR01617">
    <property type="entry name" value="arsC_related"/>
    <property type="match status" value="1"/>
</dbReference>
<dbReference type="NCBIfam" id="NF002459">
    <property type="entry name" value="PRK01655.1"/>
    <property type="match status" value="1"/>
</dbReference>
<dbReference type="NCBIfam" id="NF009210">
    <property type="entry name" value="PRK12559.1"/>
    <property type="match status" value="1"/>
</dbReference>
<dbReference type="PANTHER" id="PTHR30041">
    <property type="entry name" value="ARSENATE REDUCTASE"/>
    <property type="match status" value="1"/>
</dbReference>
<dbReference type="PANTHER" id="PTHR30041:SF7">
    <property type="entry name" value="GLOBAL TRANSCRIPTIONAL REGULATOR SPX"/>
    <property type="match status" value="1"/>
</dbReference>
<dbReference type="Pfam" id="PF03960">
    <property type="entry name" value="ArsC"/>
    <property type="match status" value="1"/>
</dbReference>
<dbReference type="SUPFAM" id="SSF52833">
    <property type="entry name" value="Thioredoxin-like"/>
    <property type="match status" value="1"/>
</dbReference>
<dbReference type="PROSITE" id="PS51353">
    <property type="entry name" value="ARSC"/>
    <property type="match status" value="1"/>
</dbReference>
<sequence>MVTLFTSPSCTSCRKAKAWLQEHDIPYTERNIFSEHLTIDEIKQILKMTEDGTDEIISTRSKTYQKLNVDIDALPLQDLYSIIQDNPGLLRRPIILDEKRLQVGYNEDEIRRFLPRKVRTFQLQEAQRMVD</sequence>
<keyword id="KW-0963">Cytoplasm</keyword>
<keyword id="KW-1015">Disulfide bond</keyword>
<keyword id="KW-0676">Redox-active center</keyword>
<keyword id="KW-1185">Reference proteome</keyword>
<keyword id="KW-0804">Transcription</keyword>
<keyword id="KW-0805">Transcription regulation</keyword>
<protein>
    <recommendedName>
        <fullName evidence="1">Global transcriptional regulator Spx</fullName>
    </recommendedName>
</protein>